<keyword id="KW-0342">GTP-binding</keyword>
<keyword id="KW-0547">Nucleotide-binding</keyword>
<keyword id="KW-0548">Nucleotidyltransferase</keyword>
<keyword id="KW-1185">Reference proteome</keyword>
<keyword id="KW-0808">Transferase</keyword>
<organism>
    <name type="scientific">Phenylobacterium zucineum (strain HLK1)</name>
    <dbReference type="NCBI Taxonomy" id="450851"/>
    <lineage>
        <taxon>Bacteria</taxon>
        <taxon>Pseudomonadati</taxon>
        <taxon>Pseudomonadota</taxon>
        <taxon>Alphaproteobacteria</taxon>
        <taxon>Caulobacterales</taxon>
        <taxon>Caulobacteraceae</taxon>
        <taxon>Phenylobacterium</taxon>
    </lineage>
</organism>
<protein>
    <recommendedName>
        <fullName evidence="1">3-phospho-D-glycerate guanylyltransferase</fullName>
        <shortName evidence="1">3PG guanylyltransferase</shortName>
        <ecNumber evidence="1">2.7.7.106</ecNumber>
    </recommendedName>
</protein>
<accession>B4RGP0</accession>
<comment type="function">
    <text evidence="1">Guanylyltransferase that catalyzes the activation of (2R)-3-phosphoglycerate (3PG) as 3-[(R)-glyceryl]-diphospho-5'-guanosine, via the condensation of 3PG with GTP. It is involved in the biosynthesis of a derivative of the hydride carrier cofactor coenzyme F420, 3PG-F420.</text>
</comment>
<comment type="catalytic activity">
    <reaction evidence="1">
        <text>(2R)-3-phosphoglycerate + GTP + H(+) = 3-[(R)-glyceryl]-diphospho-5'-guanosine + diphosphate</text>
        <dbReference type="Rhea" id="RHEA:63440"/>
        <dbReference type="ChEBI" id="CHEBI:15378"/>
        <dbReference type="ChEBI" id="CHEBI:33019"/>
        <dbReference type="ChEBI" id="CHEBI:37565"/>
        <dbReference type="ChEBI" id="CHEBI:58272"/>
        <dbReference type="ChEBI" id="CHEBI:147306"/>
        <dbReference type="EC" id="2.7.7.106"/>
    </reaction>
</comment>
<comment type="pathway">
    <text evidence="1">Cofactor biosynthesis; coenzyme F420 biosynthesis.</text>
</comment>
<comment type="similarity">
    <text evidence="1">Belongs to the CofC family.</text>
</comment>
<evidence type="ECO:0000255" key="1">
    <source>
        <dbReference type="HAMAP-Rule" id="MF_02114"/>
    </source>
</evidence>
<gene>
    <name evidence="1" type="primary">fbiD</name>
    <name type="ordered locus">PHZ_c2537</name>
</gene>
<reference key="1">
    <citation type="journal article" date="2008" name="BMC Genomics">
        <title>Complete genome of Phenylobacterium zucineum - a novel facultative intracellular bacterium isolated from human erythroleukemia cell line K562.</title>
        <authorList>
            <person name="Luo Y."/>
            <person name="Xu X."/>
            <person name="Ding Z."/>
            <person name="Liu Z."/>
            <person name="Zhang B."/>
            <person name="Yan Z."/>
            <person name="Sun J."/>
            <person name="Hu S."/>
            <person name="Hu X."/>
        </authorList>
    </citation>
    <scope>NUCLEOTIDE SEQUENCE [LARGE SCALE GENOMIC DNA]</scope>
    <source>
        <strain>HLK1</strain>
    </source>
</reference>
<sequence length="218" mass="22786">MAEAILAVRGGLGAKSRLAAVFSDAERAALVEAMLLDMLDALAGAGAGAVRRVWVVTPTERLERLAAAAGARVIREPRPAGLNAAFRCGLAAAAEEAPYADIVLLPGDLPTLRAQDVDAALLLLRTHDLVLALASRDGGTGLLAVRAGVPFTPQFGAQSCARHRRQARARGLSCALVEAGSLALDLDRPEDAVEVARGPCGRRTAEVLSDLKSRWRAQ</sequence>
<proteinExistence type="inferred from homology"/>
<feature type="chain" id="PRO_0000398704" description="3-phospho-D-glycerate guanylyltransferase">
    <location>
        <begin position="1"/>
        <end position="218"/>
    </location>
</feature>
<dbReference type="EC" id="2.7.7.106" evidence="1"/>
<dbReference type="EMBL" id="CP000747">
    <property type="protein sequence ID" value="ACG78946.1"/>
    <property type="molecule type" value="Genomic_DNA"/>
</dbReference>
<dbReference type="RefSeq" id="WP_012523084.1">
    <property type="nucleotide sequence ID" value="NC_011144.1"/>
</dbReference>
<dbReference type="SMR" id="B4RGP0"/>
<dbReference type="STRING" id="450851.PHZ_c2537"/>
<dbReference type="KEGG" id="pzu:PHZ_c2537"/>
<dbReference type="eggNOG" id="COG1920">
    <property type="taxonomic scope" value="Bacteria"/>
</dbReference>
<dbReference type="HOGENOM" id="CLU_076569_1_0_5"/>
<dbReference type="UniPathway" id="UPA00071"/>
<dbReference type="Proteomes" id="UP000001868">
    <property type="component" value="Chromosome"/>
</dbReference>
<dbReference type="GO" id="GO:0005525">
    <property type="term" value="F:GTP binding"/>
    <property type="evidence" value="ECO:0007669"/>
    <property type="project" value="UniProtKB-KW"/>
</dbReference>
<dbReference type="GO" id="GO:0043814">
    <property type="term" value="F:phospholactate guanylyltransferase activity"/>
    <property type="evidence" value="ECO:0007669"/>
    <property type="project" value="InterPro"/>
</dbReference>
<dbReference type="GO" id="GO:0052645">
    <property type="term" value="P:F420-0 metabolic process"/>
    <property type="evidence" value="ECO:0007669"/>
    <property type="project" value="UniProtKB-UniRule"/>
</dbReference>
<dbReference type="Gene3D" id="3.90.550.10">
    <property type="entry name" value="Spore Coat Polysaccharide Biosynthesis Protein SpsA, Chain A"/>
    <property type="match status" value="1"/>
</dbReference>
<dbReference type="HAMAP" id="MF_02114">
    <property type="entry name" value="CofC"/>
    <property type="match status" value="1"/>
</dbReference>
<dbReference type="InterPro" id="IPR002835">
    <property type="entry name" value="CofC"/>
</dbReference>
<dbReference type="InterPro" id="IPR029044">
    <property type="entry name" value="Nucleotide-diphossugar_trans"/>
</dbReference>
<dbReference type="NCBIfam" id="TIGR03552">
    <property type="entry name" value="F420_cofC"/>
    <property type="match status" value="1"/>
</dbReference>
<dbReference type="PANTHER" id="PTHR40392">
    <property type="entry name" value="2-PHOSPHO-L-LACTATE GUANYLYLTRANSFERASE"/>
    <property type="match status" value="1"/>
</dbReference>
<dbReference type="PANTHER" id="PTHR40392:SF1">
    <property type="entry name" value="2-PHOSPHO-L-LACTATE GUANYLYLTRANSFERASE"/>
    <property type="match status" value="1"/>
</dbReference>
<dbReference type="Pfam" id="PF01983">
    <property type="entry name" value="CofC"/>
    <property type="match status" value="1"/>
</dbReference>
<dbReference type="SUPFAM" id="SSF53448">
    <property type="entry name" value="Nucleotide-diphospho-sugar transferases"/>
    <property type="match status" value="1"/>
</dbReference>
<name>FBID_PHEZH</name>